<keyword id="KW-0067">ATP-binding</keyword>
<keyword id="KW-0963">Cytoplasm</keyword>
<keyword id="KW-0436">Ligase</keyword>
<keyword id="KW-0460">Magnesium</keyword>
<keyword id="KW-0479">Metal-binding</keyword>
<keyword id="KW-0547">Nucleotide-binding</keyword>
<keyword id="KW-0658">Purine biosynthesis</keyword>
<protein>
    <recommendedName>
        <fullName evidence="1">Phosphoribosylformylglycinamidine synthase subunit PurL</fullName>
        <shortName evidence="1">FGAM synthase</shortName>
        <ecNumber evidence="1">6.3.5.3</ecNumber>
    </recommendedName>
    <alternativeName>
        <fullName evidence="1">Formylglycinamide ribonucleotide amidotransferase subunit II</fullName>
        <shortName evidence="1">FGAR amidotransferase II</shortName>
        <shortName evidence="1">FGAR-AT II</shortName>
    </alternativeName>
    <alternativeName>
        <fullName evidence="1">Glutamine amidotransferase PurL</fullName>
    </alternativeName>
    <alternativeName>
        <fullName evidence="1">Phosphoribosylformylglycinamidine synthase subunit II</fullName>
    </alternativeName>
</protein>
<proteinExistence type="inferred from homology"/>
<reference key="1">
    <citation type="journal article" date="2006" name="Proc. Natl. Acad. Sci. U.S.A.">
        <title>Comparative genomics of the lactic acid bacteria.</title>
        <authorList>
            <person name="Makarova K.S."/>
            <person name="Slesarev A."/>
            <person name="Wolf Y.I."/>
            <person name="Sorokin A."/>
            <person name="Mirkin B."/>
            <person name="Koonin E.V."/>
            <person name="Pavlov A."/>
            <person name="Pavlova N."/>
            <person name="Karamychev V."/>
            <person name="Polouchine N."/>
            <person name="Shakhova V."/>
            <person name="Grigoriev I."/>
            <person name="Lou Y."/>
            <person name="Rohksar D."/>
            <person name="Lucas S."/>
            <person name="Huang K."/>
            <person name="Goodstein D.M."/>
            <person name="Hawkins T."/>
            <person name="Plengvidhya V."/>
            <person name="Welker D."/>
            <person name="Hughes J."/>
            <person name="Goh Y."/>
            <person name="Benson A."/>
            <person name="Baldwin K."/>
            <person name="Lee J.-H."/>
            <person name="Diaz-Muniz I."/>
            <person name="Dosti B."/>
            <person name="Smeianov V."/>
            <person name="Wechter W."/>
            <person name="Barabote R."/>
            <person name="Lorca G."/>
            <person name="Altermann E."/>
            <person name="Barrangou R."/>
            <person name="Ganesan B."/>
            <person name="Xie Y."/>
            <person name="Rawsthorne H."/>
            <person name="Tamir D."/>
            <person name="Parker C."/>
            <person name="Breidt F."/>
            <person name="Broadbent J.R."/>
            <person name="Hutkins R."/>
            <person name="O'Sullivan D."/>
            <person name="Steele J."/>
            <person name="Unlu G."/>
            <person name="Saier M.H. Jr."/>
            <person name="Klaenhammer T."/>
            <person name="Richardson P."/>
            <person name="Kozyavkin S."/>
            <person name="Weimer B.C."/>
            <person name="Mills D.A."/>
        </authorList>
    </citation>
    <scope>NUCLEOTIDE SEQUENCE [LARGE SCALE GENOMIC DNA]</scope>
    <source>
        <strain>SK11</strain>
    </source>
</reference>
<dbReference type="EC" id="6.3.5.3" evidence="1"/>
<dbReference type="EMBL" id="CP000425">
    <property type="protein sequence ID" value="ABJ73117.1"/>
    <property type="molecule type" value="Genomic_DNA"/>
</dbReference>
<dbReference type="RefSeq" id="WP_011676476.1">
    <property type="nucleotide sequence ID" value="NC_008527.1"/>
</dbReference>
<dbReference type="SMR" id="Q02Y55"/>
<dbReference type="KEGG" id="llc:LACR_1619"/>
<dbReference type="HOGENOM" id="CLU_003100_0_1_9"/>
<dbReference type="UniPathway" id="UPA00074">
    <property type="reaction ID" value="UER00128"/>
</dbReference>
<dbReference type="Proteomes" id="UP000000240">
    <property type="component" value="Chromosome"/>
</dbReference>
<dbReference type="GO" id="GO:0005737">
    <property type="term" value="C:cytoplasm"/>
    <property type="evidence" value="ECO:0007669"/>
    <property type="project" value="UniProtKB-SubCell"/>
</dbReference>
<dbReference type="GO" id="GO:0005524">
    <property type="term" value="F:ATP binding"/>
    <property type="evidence" value="ECO:0007669"/>
    <property type="project" value="UniProtKB-UniRule"/>
</dbReference>
<dbReference type="GO" id="GO:0000287">
    <property type="term" value="F:magnesium ion binding"/>
    <property type="evidence" value="ECO:0007669"/>
    <property type="project" value="UniProtKB-UniRule"/>
</dbReference>
<dbReference type="GO" id="GO:0004642">
    <property type="term" value="F:phosphoribosylformylglycinamidine synthase activity"/>
    <property type="evidence" value="ECO:0007669"/>
    <property type="project" value="UniProtKB-UniRule"/>
</dbReference>
<dbReference type="GO" id="GO:0006189">
    <property type="term" value="P:'de novo' IMP biosynthetic process"/>
    <property type="evidence" value="ECO:0007669"/>
    <property type="project" value="UniProtKB-UniRule"/>
</dbReference>
<dbReference type="CDD" id="cd02203">
    <property type="entry name" value="PurL_repeat1"/>
    <property type="match status" value="1"/>
</dbReference>
<dbReference type="CDD" id="cd02204">
    <property type="entry name" value="PurL_repeat2"/>
    <property type="match status" value="1"/>
</dbReference>
<dbReference type="FunFam" id="3.30.1330.10:FF:000004">
    <property type="entry name" value="Phosphoribosylformylglycinamidine synthase subunit PurL"/>
    <property type="match status" value="1"/>
</dbReference>
<dbReference type="FunFam" id="3.90.650.10:FF:000009">
    <property type="entry name" value="Phosphoribosylformylglycinamidine synthase subunit PurL"/>
    <property type="match status" value="1"/>
</dbReference>
<dbReference type="Gene3D" id="3.90.650.10">
    <property type="entry name" value="PurM-like C-terminal domain"/>
    <property type="match status" value="2"/>
</dbReference>
<dbReference type="Gene3D" id="3.30.1330.10">
    <property type="entry name" value="PurM-like, N-terminal domain"/>
    <property type="match status" value="2"/>
</dbReference>
<dbReference type="HAMAP" id="MF_00420">
    <property type="entry name" value="PurL_2"/>
    <property type="match status" value="1"/>
</dbReference>
<dbReference type="InterPro" id="IPR010074">
    <property type="entry name" value="PRibForGlyAmidine_synth_PurL"/>
</dbReference>
<dbReference type="InterPro" id="IPR041609">
    <property type="entry name" value="PurL_linker"/>
</dbReference>
<dbReference type="InterPro" id="IPR010918">
    <property type="entry name" value="PurM-like_C_dom"/>
</dbReference>
<dbReference type="InterPro" id="IPR036676">
    <property type="entry name" value="PurM-like_C_sf"/>
</dbReference>
<dbReference type="InterPro" id="IPR016188">
    <property type="entry name" value="PurM-like_N"/>
</dbReference>
<dbReference type="InterPro" id="IPR036921">
    <property type="entry name" value="PurM-like_N_sf"/>
</dbReference>
<dbReference type="NCBIfam" id="TIGR01736">
    <property type="entry name" value="FGAM_synth_II"/>
    <property type="match status" value="1"/>
</dbReference>
<dbReference type="NCBIfam" id="NF002290">
    <property type="entry name" value="PRK01213.1"/>
    <property type="match status" value="1"/>
</dbReference>
<dbReference type="PANTHER" id="PTHR43555">
    <property type="entry name" value="PHOSPHORIBOSYLFORMYLGLYCINAMIDINE SYNTHASE SUBUNIT PURL"/>
    <property type="match status" value="1"/>
</dbReference>
<dbReference type="PANTHER" id="PTHR43555:SF1">
    <property type="entry name" value="PHOSPHORIBOSYLFORMYLGLYCINAMIDINE SYNTHASE SUBUNIT PURL"/>
    <property type="match status" value="1"/>
</dbReference>
<dbReference type="Pfam" id="PF00586">
    <property type="entry name" value="AIRS"/>
    <property type="match status" value="2"/>
</dbReference>
<dbReference type="Pfam" id="PF02769">
    <property type="entry name" value="AIRS_C"/>
    <property type="match status" value="2"/>
</dbReference>
<dbReference type="Pfam" id="PF18072">
    <property type="entry name" value="FGAR-AT_linker"/>
    <property type="match status" value="1"/>
</dbReference>
<dbReference type="PIRSF" id="PIRSF001587">
    <property type="entry name" value="FGAM_synthase_II"/>
    <property type="match status" value="1"/>
</dbReference>
<dbReference type="SUPFAM" id="SSF56042">
    <property type="entry name" value="PurM C-terminal domain-like"/>
    <property type="match status" value="2"/>
</dbReference>
<dbReference type="SUPFAM" id="SSF55326">
    <property type="entry name" value="PurM N-terminal domain-like"/>
    <property type="match status" value="2"/>
</dbReference>
<sequence length="739" mass="79650">MTLEMLPEQIQESKIYREWGLTDEEYLKIKDEILGGRLPNFTETGMYAVMWSEHCCYKNSKPVLKKFPTTGPQVLMGPGEGAGVVDIGDDLAVVFKAESHNHPSYVEPYEGAATGSGGIIRDIFSMGARPIAILDSLRFGPIDNGKTRHIVDQVTAGIAGYGNCIGIPTVGGEVAFDESYAGNPLVNVMCVGLIEHKHIQKGQAKGVGNSIFYVGAKTGRDGIHGASFASKEFGSGSETQRSAVQVGDPFMEKLLLEACIEVIQNHGDILVGIQDMGAAGLVSSTSEMASKAGSGLRLNLDNVPQRETEMIPYEMMLSESQERMVLCVKKGHEQEIIDLFKKYDLDAVNIGEVTDDGFYTLYHKGQMVAHVPVDSLAEDAPTYYREAKVPERIQKFTDSEKYLPEITDSAVSEIFKKLLAQPTIASKKSIYETYDSRVMTNTVVAPGSDAAVLRVRGTNKALAMTTDCNARYLYLDPEKGGAIAVAEAARNIVASGGKPLAITDCLNFGNPEKPEQFWELTTAADGISRSCLALDTPVISGNVSLYNETNGSAILPTPMIGMVGLIEDVKNITTQEFKKAGDLIVLVGQTFDDFSGSELQKMLTGEISGKIDFDLETEKVNQDFVLKAITDGLINSAHDLSEGGLAIALAESAFANGLGIDVEVDLSNAQLFSETQGRFVLSISPENQAAFEKLLTESSASSEVIGKVTDNGILKINELSISTDEAVSIYEGALPCLMK</sequence>
<accession>Q02Y55</accession>
<feature type="chain" id="PRO_1000060090" description="Phosphoribosylformylglycinamidine synthase subunit PurL">
    <location>
        <begin position="1"/>
        <end position="739"/>
    </location>
</feature>
<feature type="active site" evidence="1">
    <location>
        <position position="54"/>
    </location>
</feature>
<feature type="active site" description="Proton acceptor" evidence="1">
    <location>
        <position position="100"/>
    </location>
</feature>
<feature type="binding site" evidence="1">
    <location>
        <position position="57"/>
    </location>
    <ligand>
        <name>ATP</name>
        <dbReference type="ChEBI" id="CHEBI:30616"/>
    </ligand>
</feature>
<feature type="binding site" evidence="1">
    <location>
        <position position="96"/>
    </location>
    <ligand>
        <name>ATP</name>
        <dbReference type="ChEBI" id="CHEBI:30616"/>
    </ligand>
</feature>
<feature type="binding site" evidence="1">
    <location>
        <position position="98"/>
    </location>
    <ligand>
        <name>Mg(2+)</name>
        <dbReference type="ChEBI" id="CHEBI:18420"/>
        <label>1</label>
    </ligand>
</feature>
<feature type="binding site" evidence="1">
    <location>
        <begin position="99"/>
        <end position="102"/>
    </location>
    <ligand>
        <name>substrate</name>
    </ligand>
</feature>
<feature type="binding site" evidence="1">
    <location>
        <position position="121"/>
    </location>
    <ligand>
        <name>substrate</name>
    </ligand>
</feature>
<feature type="binding site" evidence="1">
    <location>
        <position position="122"/>
    </location>
    <ligand>
        <name>Mg(2+)</name>
        <dbReference type="ChEBI" id="CHEBI:18420"/>
        <label>2</label>
    </ligand>
</feature>
<feature type="binding site" evidence="1">
    <location>
        <position position="245"/>
    </location>
    <ligand>
        <name>substrate</name>
    </ligand>
</feature>
<feature type="binding site" evidence="1">
    <location>
        <position position="275"/>
    </location>
    <ligand>
        <name>Mg(2+)</name>
        <dbReference type="ChEBI" id="CHEBI:18420"/>
        <label>2</label>
    </ligand>
</feature>
<feature type="binding site" evidence="1">
    <location>
        <begin position="319"/>
        <end position="321"/>
    </location>
    <ligand>
        <name>substrate</name>
    </ligand>
</feature>
<feature type="binding site" evidence="1">
    <location>
        <position position="504"/>
    </location>
    <ligand>
        <name>ATP</name>
        <dbReference type="ChEBI" id="CHEBI:30616"/>
    </ligand>
</feature>
<feature type="binding site" evidence="1">
    <location>
        <position position="541"/>
    </location>
    <ligand>
        <name>ATP</name>
        <dbReference type="ChEBI" id="CHEBI:30616"/>
    </ligand>
</feature>
<feature type="binding site" evidence="1">
    <location>
        <position position="542"/>
    </location>
    <ligand>
        <name>Mg(2+)</name>
        <dbReference type="ChEBI" id="CHEBI:18420"/>
        <label>1</label>
    </ligand>
</feature>
<feature type="binding site" evidence="1">
    <location>
        <position position="544"/>
    </location>
    <ligand>
        <name>substrate</name>
    </ligand>
</feature>
<gene>
    <name evidence="1" type="primary">purL</name>
    <name type="ordered locus">LACR_1619</name>
</gene>
<comment type="function">
    <text evidence="1">Part of the phosphoribosylformylglycinamidine synthase complex involved in the purines biosynthetic pathway. Catalyzes the ATP-dependent conversion of formylglycinamide ribonucleotide (FGAR) and glutamine to yield formylglycinamidine ribonucleotide (FGAM) and glutamate. The FGAM synthase complex is composed of three subunits. PurQ produces an ammonia molecule by converting glutamine to glutamate. PurL transfers the ammonia molecule to FGAR to form FGAM in an ATP-dependent manner. PurS interacts with PurQ and PurL and is thought to assist in the transfer of the ammonia molecule from PurQ to PurL.</text>
</comment>
<comment type="catalytic activity">
    <reaction evidence="1">
        <text>N(2)-formyl-N(1)-(5-phospho-beta-D-ribosyl)glycinamide + L-glutamine + ATP + H2O = 2-formamido-N(1)-(5-O-phospho-beta-D-ribosyl)acetamidine + L-glutamate + ADP + phosphate + H(+)</text>
        <dbReference type="Rhea" id="RHEA:17129"/>
        <dbReference type="ChEBI" id="CHEBI:15377"/>
        <dbReference type="ChEBI" id="CHEBI:15378"/>
        <dbReference type="ChEBI" id="CHEBI:29985"/>
        <dbReference type="ChEBI" id="CHEBI:30616"/>
        <dbReference type="ChEBI" id="CHEBI:43474"/>
        <dbReference type="ChEBI" id="CHEBI:58359"/>
        <dbReference type="ChEBI" id="CHEBI:147286"/>
        <dbReference type="ChEBI" id="CHEBI:147287"/>
        <dbReference type="ChEBI" id="CHEBI:456216"/>
        <dbReference type="EC" id="6.3.5.3"/>
    </reaction>
</comment>
<comment type="pathway">
    <text evidence="1">Purine metabolism; IMP biosynthesis via de novo pathway; 5-amino-1-(5-phospho-D-ribosyl)imidazole from N(2)-formyl-N(1)-(5-phospho-D-ribosyl)glycinamide: step 1/2.</text>
</comment>
<comment type="subunit">
    <text evidence="1">Monomer. Part of the FGAM synthase complex composed of 1 PurL, 1 PurQ and 2 PurS subunits.</text>
</comment>
<comment type="subcellular location">
    <subcellularLocation>
        <location evidence="1">Cytoplasm</location>
    </subcellularLocation>
</comment>
<comment type="similarity">
    <text evidence="1">Belongs to the FGAMS family.</text>
</comment>
<name>PURL_LACLS</name>
<organism>
    <name type="scientific">Lactococcus lactis subsp. cremoris (strain SK11)</name>
    <dbReference type="NCBI Taxonomy" id="272622"/>
    <lineage>
        <taxon>Bacteria</taxon>
        <taxon>Bacillati</taxon>
        <taxon>Bacillota</taxon>
        <taxon>Bacilli</taxon>
        <taxon>Lactobacillales</taxon>
        <taxon>Streptococcaceae</taxon>
        <taxon>Lactococcus</taxon>
        <taxon>Lactococcus cremoris subsp. cremoris</taxon>
    </lineage>
</organism>
<evidence type="ECO:0000255" key="1">
    <source>
        <dbReference type="HAMAP-Rule" id="MF_00420"/>
    </source>
</evidence>